<gene>
    <name evidence="1 6" type="primary">fmt</name>
    <name type="synonym">yhdD</name>
    <name type="ordered locus">b3288</name>
    <name type="ordered locus">JW3249</name>
</gene>
<proteinExistence type="evidence at protein level"/>
<accession>P23882</accession>
<accession>P77040</accession>
<accession>Q2M6V2</accession>
<reference key="1">
    <citation type="journal article" date="1992" name="J. Bacteriol.">
        <title>Disruption of the gene for Met-tRNA(fMet) formyltransferase severely impairs growth of Escherichia coli.</title>
        <authorList>
            <person name="Guillon J.-M."/>
            <person name="Mechulam Y."/>
            <person name="Schmitter J.-M."/>
            <person name="Blanquet S."/>
            <person name="Fayat G."/>
        </authorList>
    </citation>
    <scope>NUCLEOTIDE SEQUENCE [GENOMIC DNA]</scope>
    <scope>PARTIAL PROTEIN SEQUENCE</scope>
    <source>
        <strain>K12 / K37</strain>
    </source>
</reference>
<reference key="2">
    <citation type="journal article" date="1993" name="J. Bacteriol.">
        <title>The Escherichia coli fmt gene, encoding methionyl-tRNA(fMet) formyltransferase, escapes metabolic control.</title>
        <authorList>
            <person name="Meinnel T."/>
            <person name="Guillon J.-M."/>
            <person name="Mechulam Y."/>
            <person name="Blanquet S."/>
        </authorList>
    </citation>
    <scope>NUCLEOTIDE SEQUENCE [GENOMIC DNA]</scope>
    <source>
        <strain>K12 / K37</strain>
    </source>
</reference>
<reference key="3">
    <citation type="journal article" date="1997" name="Science">
        <title>The complete genome sequence of Escherichia coli K-12.</title>
        <authorList>
            <person name="Blattner F.R."/>
            <person name="Plunkett G. III"/>
            <person name="Bloch C.A."/>
            <person name="Perna N.T."/>
            <person name="Burland V."/>
            <person name="Riley M."/>
            <person name="Collado-Vides J."/>
            <person name="Glasner J.D."/>
            <person name="Rode C.K."/>
            <person name="Mayhew G.F."/>
            <person name="Gregor J."/>
            <person name="Davis N.W."/>
            <person name="Kirkpatrick H.A."/>
            <person name="Goeden M.A."/>
            <person name="Rose D.J."/>
            <person name="Mau B."/>
            <person name="Shao Y."/>
        </authorList>
    </citation>
    <scope>NUCLEOTIDE SEQUENCE [LARGE SCALE GENOMIC DNA]</scope>
    <source>
        <strain>K12 / MG1655 / ATCC 47076</strain>
    </source>
</reference>
<reference key="4">
    <citation type="journal article" date="2006" name="Mol. Syst. Biol.">
        <title>Highly accurate genome sequences of Escherichia coli K-12 strains MG1655 and W3110.</title>
        <authorList>
            <person name="Hayashi K."/>
            <person name="Morooka N."/>
            <person name="Yamamoto Y."/>
            <person name="Fujita K."/>
            <person name="Isono K."/>
            <person name="Choi S."/>
            <person name="Ohtsubo E."/>
            <person name="Baba T."/>
            <person name="Wanner B.L."/>
            <person name="Mori H."/>
            <person name="Horiuchi T."/>
        </authorList>
    </citation>
    <scope>NUCLEOTIDE SEQUENCE [LARGE SCALE GENOMIC DNA]</scope>
    <source>
        <strain>K12 / W3110 / ATCC 27325 / DSM 5911</strain>
    </source>
</reference>
<reference key="5">
    <citation type="journal article" date="1994" name="EMBO J.">
        <title>Genetic characterization of polypeptide deformylase, a distinctive enzyme of eubacterial translation.</title>
        <authorList>
            <person name="Mazel D."/>
            <person name="Pochet S."/>
            <person name="Marliere P."/>
        </authorList>
    </citation>
    <scope>NUCLEOTIDE SEQUENCE [GENOMIC DNA] OF 1-82</scope>
</reference>
<reference key="6">
    <citation type="journal article" date="1984" name="Nucleic Acids Res.">
        <title>Nucleotide sequence of the rpoA-rplQ DNA of Escherichia coli: a second regulatory binding site for protein S4?</title>
        <authorList>
            <person name="Meek D.W."/>
            <person name="Hayward R.S."/>
        </authorList>
    </citation>
    <scope>PRELIMINARY NUCLEOTIDE SEQUENCE [GENOMIC DNA] OF 82-162</scope>
</reference>
<reference key="7">
    <citation type="journal article" date="1997" name="J. Mol. Biol.">
        <title>A survey of polypeptide deformylase function throughout the eubacterial lineage.</title>
        <authorList>
            <person name="Mazel D."/>
            <person name="Coic E."/>
            <person name="Blanchard S."/>
            <person name="Saurin W."/>
            <person name="Marliere P."/>
        </authorList>
    </citation>
    <scope>NUCLEOTIDE SEQUENCE [GENOMIC DNA] OF 161-315</scope>
    <source>
        <strain>K12 / MG1655 / ATCC 47076</strain>
    </source>
</reference>
<reference key="8">
    <citation type="journal article" date="1980" name="Eur. J. Biochem.">
        <title>Methionyl-transfer-RNA transformylase from Escherichia coli. Purification and characterisation.</title>
        <authorList>
            <person name="Kahn D."/>
            <person name="Fromant M."/>
            <person name="Fayat G."/>
            <person name="Dessen P."/>
            <person name="Blanquet S."/>
        </authorList>
    </citation>
    <scope>FUNCTION</scope>
    <scope>CATALYTIC ACTIVITY</scope>
    <scope>ACTIVITY REGULATION</scope>
    <scope>BIOPHYSICOCHEMICAL PROPERTIES</scope>
    <scope>SUBUNIT</scope>
</reference>
<reference key="9">
    <citation type="journal article" date="1993" name="J. Bacteriol.">
        <title>Importance of formylability and anticodon stem sequence to give a tRNA(Met) an initiator identity in Escherichia coli.</title>
        <authorList>
            <person name="Guillon J.M."/>
            <person name="Mechulam Y."/>
            <person name="Blanquet S."/>
            <person name="Fayat G."/>
        </authorList>
    </citation>
    <scope>FUNCTION</scope>
</reference>
<reference key="10">
    <citation type="journal article" date="1997" name="Electrophoresis">
        <title>Escherichia coli proteome analysis using the gene-protein database.</title>
        <authorList>
            <person name="VanBogelen R.A."/>
            <person name="Abshire K.Z."/>
            <person name="Moldover B."/>
            <person name="Olson E.R."/>
            <person name="Neidhardt F.C."/>
        </authorList>
    </citation>
    <scope>IDENTIFICATION BY 2D-GEL</scope>
</reference>
<reference evidence="10" key="11">
    <citation type="journal article" date="1996" name="EMBO J.">
        <title>Structure of crystalline Escherichia coli methionyl-tRNA(f)Met formyltransferase: comparison with glycinamide ribonucleotide formyltransferase.</title>
        <authorList>
            <person name="Schmitt E."/>
            <person name="Blanquet S."/>
            <person name="Mechulam Y."/>
        </authorList>
    </citation>
    <scope>X-RAY CRYSTALLOGRAPHY (2.0 ANGSTROMS)</scope>
    <scope>DOMAIN</scope>
</reference>
<reference evidence="11" key="12">
    <citation type="journal article" date="1998" name="EMBO J.">
        <title>Crystal structure of methionyl-tRNAfMet transformylase complexed with the initiator formyl-methionyl-tRNAfMet.</title>
        <authorList>
            <person name="Schmitt E."/>
            <person name="Panvert M."/>
            <person name="Blanquet S."/>
            <person name="Mechulam Y."/>
        </authorList>
    </citation>
    <scope>X-RAY CRYSTALLOGRAPHY (2.8 ANGSTROMS)</scope>
    <scope>FUNCTION</scope>
    <scope>CATALYTIC ACTIVITY</scope>
    <scope>DOMAIN</scope>
</reference>
<organism>
    <name type="scientific">Escherichia coli (strain K12)</name>
    <dbReference type="NCBI Taxonomy" id="83333"/>
    <lineage>
        <taxon>Bacteria</taxon>
        <taxon>Pseudomonadati</taxon>
        <taxon>Pseudomonadota</taxon>
        <taxon>Gammaproteobacteria</taxon>
        <taxon>Enterobacterales</taxon>
        <taxon>Enterobacteriaceae</taxon>
        <taxon>Escherichia</taxon>
    </lineage>
</organism>
<comment type="function">
    <text evidence="1 2 3 5">Attaches a formyl group to the free amino group of methionyl-tRNA(fMet). The formyl group appears to play a dual role in the initiator identity of N-formylmethionyl-tRNA by promoting its recognition by IF2 and preventing the misappropriation of this tRNA by the elongation apparatus.</text>
</comment>
<comment type="catalytic activity">
    <reaction evidence="1 2 5">
        <text>L-methionyl-tRNA(fMet) + (6R)-10-formyltetrahydrofolate = N-formyl-L-methionyl-tRNA(fMet) + (6S)-5,6,7,8-tetrahydrofolate + H(+)</text>
        <dbReference type="Rhea" id="RHEA:24380"/>
        <dbReference type="Rhea" id="RHEA-COMP:9952"/>
        <dbReference type="Rhea" id="RHEA-COMP:9953"/>
        <dbReference type="ChEBI" id="CHEBI:15378"/>
        <dbReference type="ChEBI" id="CHEBI:57453"/>
        <dbReference type="ChEBI" id="CHEBI:78530"/>
        <dbReference type="ChEBI" id="CHEBI:78844"/>
        <dbReference type="ChEBI" id="CHEBI:195366"/>
        <dbReference type="EC" id="2.1.2.9"/>
    </reaction>
</comment>
<comment type="activity regulation">
    <text evidence="2">Activity is optimum in the presence of Mg(2+) and K(+).</text>
</comment>
<comment type="biophysicochemical properties">
    <kinetics>
        <KM evidence="2">13.5 uM for 10-formyltetrahydrofolate</KM>
        <KM evidence="2">0.35 uM for L-methionyl-tRNA(fMet)</KM>
    </kinetics>
</comment>
<comment type="subunit">
    <text evidence="2">Monomer.</text>
</comment>
<comment type="domain">
    <text evidence="4 5">Composed of an N- and a C-terminal domain. The N-terminal domain carries the tetrahydrofolate (THF)-binding site and the C-terminal domain is presumably involved in positioning the Met-tRNA substrate for the formylation reaction.</text>
</comment>
<comment type="similarity">
    <text evidence="1 7">Belongs to the Fmt family.</text>
</comment>
<protein>
    <recommendedName>
        <fullName evidence="1 7">Methionyl-tRNA formyltransferase</fullName>
        <ecNumber evidence="1 2 5">2.1.2.9</ecNumber>
    </recommendedName>
    <alternativeName>
        <fullName evidence="6">Met-tRNA(fMet) formyltransferase</fullName>
    </alternativeName>
</protein>
<name>FMT_ECOLI</name>
<feature type="initiator methionine" description="Removed">
    <location>
        <position position="1"/>
    </location>
</feature>
<feature type="chain" id="PRO_0000082959" description="Methionyl-tRNA formyltransferase">
    <location>
        <begin position="2"/>
        <end position="315"/>
    </location>
</feature>
<feature type="region of interest" description="N-terminal domain" evidence="8 9">
    <location>
        <begin position="2"/>
        <end position="189"/>
    </location>
</feature>
<feature type="region of interest" description="C-terminal domain" evidence="8 9">
    <location>
        <begin position="210"/>
        <end position="315"/>
    </location>
</feature>
<feature type="binding site" evidence="1">
    <location>
        <begin position="113"/>
        <end position="116"/>
    </location>
    <ligand>
        <name>(6S)-5,6,7,8-tetrahydrofolate</name>
        <dbReference type="ChEBI" id="CHEBI:57453"/>
    </ligand>
</feature>
<feature type="strand" evidence="12">
    <location>
        <begin position="6"/>
        <end position="11"/>
    </location>
</feature>
<feature type="helix" evidence="12">
    <location>
        <begin position="14"/>
        <end position="25"/>
    </location>
</feature>
<feature type="strand" evidence="12">
    <location>
        <begin position="29"/>
        <end position="34"/>
    </location>
</feature>
<feature type="strand" evidence="13">
    <location>
        <begin position="42"/>
        <end position="44"/>
    </location>
</feature>
<feature type="helix" evidence="12">
    <location>
        <begin position="51"/>
        <end position="58"/>
    </location>
</feature>
<feature type="strand" evidence="13">
    <location>
        <begin position="69"/>
        <end position="71"/>
    </location>
</feature>
<feature type="helix" evidence="12">
    <location>
        <begin position="72"/>
        <end position="80"/>
    </location>
</feature>
<feature type="strand" evidence="12">
    <location>
        <begin position="84"/>
        <end position="90"/>
    </location>
</feature>
<feature type="helix" evidence="12">
    <location>
        <begin position="97"/>
        <end position="101"/>
    </location>
</feature>
<feature type="strand" evidence="12">
    <location>
        <begin position="107"/>
        <end position="114"/>
    </location>
</feature>
<feature type="turn" evidence="12">
    <location>
        <begin position="115"/>
        <end position="118"/>
    </location>
</feature>
<feature type="strand" evidence="12">
    <location>
        <begin position="119"/>
        <end position="121"/>
    </location>
</feature>
<feature type="helix" evidence="12">
    <location>
        <begin position="123"/>
        <end position="130"/>
    </location>
</feature>
<feature type="strand" evidence="12">
    <location>
        <begin position="133"/>
        <end position="141"/>
    </location>
</feature>
<feature type="strand" evidence="12">
    <location>
        <begin position="144"/>
        <end position="147"/>
    </location>
</feature>
<feature type="strand" evidence="12">
    <location>
        <begin position="151"/>
        <end position="158"/>
    </location>
</feature>
<feature type="helix" evidence="12">
    <location>
        <begin position="165"/>
        <end position="189"/>
    </location>
</feature>
<feature type="helix" evidence="12">
    <location>
        <begin position="199"/>
        <end position="201"/>
    </location>
</feature>
<feature type="helix" evidence="12">
    <location>
        <begin position="210"/>
        <end position="213"/>
    </location>
</feature>
<feature type="helix" evidence="12">
    <location>
        <begin position="221"/>
        <end position="230"/>
    </location>
</feature>
<feature type="turn" evidence="12">
    <location>
        <begin position="231"/>
        <end position="235"/>
    </location>
</feature>
<feature type="strand" evidence="12">
    <location>
        <begin position="237"/>
        <end position="241"/>
    </location>
</feature>
<feature type="strand" evidence="12">
    <location>
        <begin position="244"/>
        <end position="254"/>
    </location>
</feature>
<feature type="strand" evidence="12">
    <location>
        <begin position="264"/>
        <end position="269"/>
    </location>
</feature>
<feature type="strand" evidence="12">
    <location>
        <begin position="272"/>
        <end position="276"/>
    </location>
</feature>
<feature type="strand" evidence="12">
    <location>
        <begin position="278"/>
        <end position="289"/>
    </location>
</feature>
<feature type="helix" evidence="12">
    <location>
        <begin position="297"/>
        <end position="303"/>
    </location>
</feature>
<feature type="helix" evidence="12">
    <location>
        <begin position="305"/>
        <end position="307"/>
    </location>
</feature>
<sequence length="315" mass="34168">MSESLRIIFAGTPDFAARHLDALLSSGHNVVGVFTQPDRPAGRGKKLMPSPVKVLAEEKGLPVFQPVSLRPQENQQLVAELQADVMVVVAYGLILPKAVLEMPRLGCINVHGSLLPRWRGAAPIQRSLWAGDAETGVTIMQMDVGLDTGDMLYKLSCPITAEDTSGTLYDKLAELGPQGLITTLKQLADGTAKPEVQDETLVTYAEKLSKEEARIDWSLSAAQLERCIRAFNPWPMSWLEIEGQPVKVWKASVIDTATNAAPGTILEANKQGIQVATGDGILNLLSLQPAGKKAMSAQDLLNSRREWFVPGNRLV</sequence>
<evidence type="ECO:0000255" key="1">
    <source>
        <dbReference type="HAMAP-Rule" id="MF_00182"/>
    </source>
</evidence>
<evidence type="ECO:0000269" key="2">
    <source>
    </source>
</evidence>
<evidence type="ECO:0000269" key="3">
    <source>
    </source>
</evidence>
<evidence type="ECO:0000269" key="4">
    <source>
    </source>
</evidence>
<evidence type="ECO:0000269" key="5">
    <source>
    </source>
</evidence>
<evidence type="ECO:0000303" key="6">
    <source>
    </source>
</evidence>
<evidence type="ECO:0000305" key="7"/>
<evidence type="ECO:0000305" key="8">
    <source>
    </source>
</evidence>
<evidence type="ECO:0000305" key="9">
    <source>
    </source>
</evidence>
<evidence type="ECO:0007744" key="10">
    <source>
        <dbReference type="PDB" id="1FMT"/>
    </source>
</evidence>
<evidence type="ECO:0007744" key="11">
    <source>
        <dbReference type="PDB" id="2FMT"/>
    </source>
</evidence>
<evidence type="ECO:0007829" key="12">
    <source>
        <dbReference type="PDB" id="1FMT"/>
    </source>
</evidence>
<evidence type="ECO:0007829" key="13">
    <source>
        <dbReference type="PDB" id="2FMT"/>
    </source>
</evidence>
<dbReference type="EC" id="2.1.2.9" evidence="1 2 5"/>
<dbReference type="EMBL" id="X63666">
    <property type="protein sequence ID" value="CAA45207.1"/>
    <property type="molecule type" value="Genomic_DNA"/>
</dbReference>
<dbReference type="EMBL" id="X77091">
    <property type="protein sequence ID" value="CAA54368.1"/>
    <property type="molecule type" value="Genomic_DNA"/>
</dbReference>
<dbReference type="EMBL" id="U18997">
    <property type="protein sequence ID" value="AAA58085.1"/>
    <property type="molecule type" value="Genomic_DNA"/>
</dbReference>
<dbReference type="EMBL" id="U00096">
    <property type="protein sequence ID" value="AAC76313.1"/>
    <property type="molecule type" value="Genomic_DNA"/>
</dbReference>
<dbReference type="EMBL" id="AP009048">
    <property type="protein sequence ID" value="BAE78004.1"/>
    <property type="molecule type" value="Genomic_DNA"/>
</dbReference>
<dbReference type="EMBL" id="X00767">
    <property type="protein sequence ID" value="CAA25339.1"/>
    <property type="status" value="ALT_SEQ"/>
    <property type="molecule type" value="Genomic_DNA"/>
</dbReference>
<dbReference type="EMBL" id="Y10307">
    <property type="protein sequence ID" value="CAA71358.1"/>
    <property type="molecule type" value="Genomic_DNA"/>
</dbReference>
<dbReference type="PIR" id="S23108">
    <property type="entry name" value="S23108"/>
</dbReference>
<dbReference type="RefSeq" id="NP_417746.1">
    <property type="nucleotide sequence ID" value="NC_000913.3"/>
</dbReference>
<dbReference type="RefSeq" id="WP_000004473.1">
    <property type="nucleotide sequence ID" value="NZ_SSZK01000040.1"/>
</dbReference>
<dbReference type="PDB" id="1FMT">
    <property type="method" value="X-ray"/>
    <property type="resolution" value="2.00 A"/>
    <property type="chains" value="A/B=2-315"/>
</dbReference>
<dbReference type="PDB" id="2FMT">
    <property type="method" value="X-ray"/>
    <property type="resolution" value="2.80 A"/>
    <property type="chains" value="A/B=2-315"/>
</dbReference>
<dbReference type="PDBsum" id="1FMT"/>
<dbReference type="PDBsum" id="2FMT"/>
<dbReference type="SMR" id="P23882"/>
<dbReference type="BioGRID" id="4263429">
    <property type="interactions" value="57"/>
</dbReference>
<dbReference type="BioGRID" id="852091">
    <property type="interactions" value="1"/>
</dbReference>
<dbReference type="DIP" id="DIP-9668N"/>
<dbReference type="FunCoup" id="P23882">
    <property type="interactions" value="737"/>
</dbReference>
<dbReference type="IntAct" id="P23882">
    <property type="interactions" value="12"/>
</dbReference>
<dbReference type="STRING" id="511145.b3288"/>
<dbReference type="DrugBank" id="DB04464">
    <property type="generic name" value="N-Formylmethionine"/>
</dbReference>
<dbReference type="jPOST" id="P23882"/>
<dbReference type="PaxDb" id="511145-b3288"/>
<dbReference type="EnsemblBacteria" id="AAC76313">
    <property type="protein sequence ID" value="AAC76313"/>
    <property type="gene ID" value="b3288"/>
</dbReference>
<dbReference type="GeneID" id="947779"/>
<dbReference type="KEGG" id="ecj:JW3249"/>
<dbReference type="KEGG" id="eco:b3288"/>
<dbReference type="KEGG" id="ecoc:C3026_17875"/>
<dbReference type="PATRIC" id="fig|1411691.4.peg.3444"/>
<dbReference type="EchoBASE" id="EB1247"/>
<dbReference type="eggNOG" id="COG0223">
    <property type="taxonomic scope" value="Bacteria"/>
</dbReference>
<dbReference type="HOGENOM" id="CLU_033347_1_2_6"/>
<dbReference type="InParanoid" id="P23882"/>
<dbReference type="OMA" id="GITTMLM"/>
<dbReference type="OrthoDB" id="9802815at2"/>
<dbReference type="PhylomeDB" id="P23882"/>
<dbReference type="BioCyc" id="EcoCyc:EG11268-MONOMER"/>
<dbReference type="BioCyc" id="MetaCyc:EG11268-MONOMER"/>
<dbReference type="BRENDA" id="2.1.2.9">
    <property type="organism ID" value="2026"/>
</dbReference>
<dbReference type="EvolutionaryTrace" id="P23882"/>
<dbReference type="PRO" id="PR:P23882"/>
<dbReference type="Proteomes" id="UP000000625">
    <property type="component" value="Chromosome"/>
</dbReference>
<dbReference type="GO" id="GO:0005829">
    <property type="term" value="C:cytosol"/>
    <property type="evidence" value="ECO:0000314"/>
    <property type="project" value="EcoCyc"/>
</dbReference>
<dbReference type="GO" id="GO:0004479">
    <property type="term" value="F:methionyl-tRNA formyltransferase activity"/>
    <property type="evidence" value="ECO:0000314"/>
    <property type="project" value="EcoCyc"/>
</dbReference>
<dbReference type="GO" id="GO:0019988">
    <property type="term" value="P:charged-tRNA amino acid modification"/>
    <property type="evidence" value="ECO:0000314"/>
    <property type="project" value="EcoCyc"/>
</dbReference>
<dbReference type="GO" id="GO:0071951">
    <property type="term" value="P:conversion of methionyl-tRNA to N-formyl-methionyl-tRNA"/>
    <property type="evidence" value="ECO:0000315"/>
    <property type="project" value="EcoCyc"/>
</dbReference>
<dbReference type="CDD" id="cd08646">
    <property type="entry name" value="FMT_core_Met-tRNA-FMT_N"/>
    <property type="match status" value="1"/>
</dbReference>
<dbReference type="CDD" id="cd08704">
    <property type="entry name" value="Met_tRNA_FMT_C"/>
    <property type="match status" value="1"/>
</dbReference>
<dbReference type="FunFam" id="3.10.25.10:FF:000001">
    <property type="entry name" value="Methionyl-tRNA formyltransferase"/>
    <property type="match status" value="1"/>
</dbReference>
<dbReference type="FunFam" id="3.40.50.12230:FF:000001">
    <property type="entry name" value="Methionyl-tRNA formyltransferase"/>
    <property type="match status" value="1"/>
</dbReference>
<dbReference type="FunFam" id="3.40.50.170:FF:000003">
    <property type="entry name" value="Methionyl-tRNA formyltransferase"/>
    <property type="match status" value="1"/>
</dbReference>
<dbReference type="Gene3D" id="3.10.25.10">
    <property type="entry name" value="Formyl transferase, C-terminal domain"/>
    <property type="match status" value="1"/>
</dbReference>
<dbReference type="Gene3D" id="3.40.50.170">
    <property type="entry name" value="Formyl transferase, N-terminal domain"/>
    <property type="match status" value="1"/>
</dbReference>
<dbReference type="HAMAP" id="MF_00182">
    <property type="entry name" value="Formyl_trans"/>
    <property type="match status" value="1"/>
</dbReference>
<dbReference type="InterPro" id="IPR005794">
    <property type="entry name" value="Fmt"/>
</dbReference>
<dbReference type="InterPro" id="IPR005793">
    <property type="entry name" value="Formyl_trans_C"/>
</dbReference>
<dbReference type="InterPro" id="IPR037022">
    <property type="entry name" value="Formyl_trans_C_sf"/>
</dbReference>
<dbReference type="InterPro" id="IPR002376">
    <property type="entry name" value="Formyl_transf_N"/>
</dbReference>
<dbReference type="InterPro" id="IPR036477">
    <property type="entry name" value="Formyl_transf_N_sf"/>
</dbReference>
<dbReference type="InterPro" id="IPR011034">
    <property type="entry name" value="Formyl_transferase-like_C_sf"/>
</dbReference>
<dbReference type="InterPro" id="IPR001555">
    <property type="entry name" value="GART_AS"/>
</dbReference>
<dbReference type="InterPro" id="IPR044135">
    <property type="entry name" value="Met-tRNA-FMT_C"/>
</dbReference>
<dbReference type="InterPro" id="IPR041711">
    <property type="entry name" value="Met-tRNA-FMT_N"/>
</dbReference>
<dbReference type="NCBIfam" id="TIGR00460">
    <property type="entry name" value="fmt"/>
    <property type="match status" value="1"/>
</dbReference>
<dbReference type="PANTHER" id="PTHR11138">
    <property type="entry name" value="METHIONYL-TRNA FORMYLTRANSFERASE"/>
    <property type="match status" value="1"/>
</dbReference>
<dbReference type="PANTHER" id="PTHR11138:SF5">
    <property type="entry name" value="METHIONYL-TRNA FORMYLTRANSFERASE, MITOCHONDRIAL"/>
    <property type="match status" value="1"/>
</dbReference>
<dbReference type="Pfam" id="PF02911">
    <property type="entry name" value="Formyl_trans_C"/>
    <property type="match status" value="1"/>
</dbReference>
<dbReference type="Pfam" id="PF00551">
    <property type="entry name" value="Formyl_trans_N"/>
    <property type="match status" value="1"/>
</dbReference>
<dbReference type="SUPFAM" id="SSF50486">
    <property type="entry name" value="FMT C-terminal domain-like"/>
    <property type="match status" value="1"/>
</dbReference>
<dbReference type="SUPFAM" id="SSF53328">
    <property type="entry name" value="Formyltransferase"/>
    <property type="match status" value="1"/>
</dbReference>
<dbReference type="PROSITE" id="PS00373">
    <property type="entry name" value="GART"/>
    <property type="match status" value="1"/>
</dbReference>
<keyword id="KW-0002">3D-structure</keyword>
<keyword id="KW-0903">Direct protein sequencing</keyword>
<keyword id="KW-0648">Protein biosynthesis</keyword>
<keyword id="KW-1185">Reference proteome</keyword>
<keyword id="KW-0808">Transferase</keyword>